<accession>Q5SHJ0</accession>
<dbReference type="EC" id="1.1.1.94" evidence="1"/>
<dbReference type="EMBL" id="AP008226">
    <property type="protein sequence ID" value="BAD71563.1"/>
    <property type="molecule type" value="Genomic_DNA"/>
</dbReference>
<dbReference type="RefSeq" id="WP_011173761.1">
    <property type="nucleotide sequence ID" value="NC_006461.1"/>
</dbReference>
<dbReference type="RefSeq" id="YP_145006.1">
    <property type="nucleotide sequence ID" value="NC_006461.1"/>
</dbReference>
<dbReference type="SMR" id="Q5SHJ0"/>
<dbReference type="EnsemblBacteria" id="BAD71563">
    <property type="protein sequence ID" value="BAD71563"/>
    <property type="gene ID" value="BAD71563"/>
</dbReference>
<dbReference type="GeneID" id="3169739"/>
<dbReference type="KEGG" id="ttj:TTHA1740"/>
<dbReference type="PATRIC" id="fig|300852.9.peg.1710"/>
<dbReference type="eggNOG" id="COG0240">
    <property type="taxonomic scope" value="Bacteria"/>
</dbReference>
<dbReference type="HOGENOM" id="CLU_033449_0_2_0"/>
<dbReference type="PhylomeDB" id="Q5SHJ0"/>
<dbReference type="UniPathway" id="UPA00940"/>
<dbReference type="Proteomes" id="UP000000532">
    <property type="component" value="Chromosome"/>
</dbReference>
<dbReference type="GO" id="GO:0005829">
    <property type="term" value="C:cytosol"/>
    <property type="evidence" value="ECO:0007669"/>
    <property type="project" value="TreeGrafter"/>
</dbReference>
<dbReference type="GO" id="GO:0047952">
    <property type="term" value="F:glycerol-3-phosphate dehydrogenase [NAD(P)+] activity"/>
    <property type="evidence" value="ECO:0007669"/>
    <property type="project" value="UniProtKB-UniRule"/>
</dbReference>
<dbReference type="GO" id="GO:0051287">
    <property type="term" value="F:NAD binding"/>
    <property type="evidence" value="ECO:0007669"/>
    <property type="project" value="InterPro"/>
</dbReference>
<dbReference type="GO" id="GO:0005975">
    <property type="term" value="P:carbohydrate metabolic process"/>
    <property type="evidence" value="ECO:0007669"/>
    <property type="project" value="InterPro"/>
</dbReference>
<dbReference type="GO" id="GO:0046167">
    <property type="term" value="P:glycerol-3-phosphate biosynthetic process"/>
    <property type="evidence" value="ECO:0007669"/>
    <property type="project" value="UniProtKB-UniRule"/>
</dbReference>
<dbReference type="GO" id="GO:0046168">
    <property type="term" value="P:glycerol-3-phosphate catabolic process"/>
    <property type="evidence" value="ECO:0007669"/>
    <property type="project" value="InterPro"/>
</dbReference>
<dbReference type="GO" id="GO:0006650">
    <property type="term" value="P:glycerophospholipid metabolic process"/>
    <property type="evidence" value="ECO:0007669"/>
    <property type="project" value="UniProtKB-UniRule"/>
</dbReference>
<dbReference type="GO" id="GO:0008654">
    <property type="term" value="P:phospholipid biosynthetic process"/>
    <property type="evidence" value="ECO:0007669"/>
    <property type="project" value="UniProtKB-KW"/>
</dbReference>
<dbReference type="FunFam" id="1.10.1040.10:FF:000001">
    <property type="entry name" value="Glycerol-3-phosphate dehydrogenase [NAD(P)+]"/>
    <property type="match status" value="1"/>
</dbReference>
<dbReference type="FunFam" id="3.40.50.720:FF:000019">
    <property type="entry name" value="Glycerol-3-phosphate dehydrogenase [NAD(P)+]"/>
    <property type="match status" value="1"/>
</dbReference>
<dbReference type="Gene3D" id="1.10.1040.10">
    <property type="entry name" value="N-(1-d-carboxylethyl)-l-norvaline Dehydrogenase, domain 2"/>
    <property type="match status" value="1"/>
</dbReference>
<dbReference type="Gene3D" id="3.40.50.720">
    <property type="entry name" value="NAD(P)-binding Rossmann-like Domain"/>
    <property type="match status" value="1"/>
</dbReference>
<dbReference type="HAMAP" id="MF_00394">
    <property type="entry name" value="NAD_Glyc3P_dehydrog"/>
    <property type="match status" value="1"/>
</dbReference>
<dbReference type="InterPro" id="IPR008927">
    <property type="entry name" value="6-PGluconate_DH-like_C_sf"/>
</dbReference>
<dbReference type="InterPro" id="IPR013328">
    <property type="entry name" value="6PGD_dom2"/>
</dbReference>
<dbReference type="InterPro" id="IPR006168">
    <property type="entry name" value="G3P_DH_NAD-dep"/>
</dbReference>
<dbReference type="InterPro" id="IPR006109">
    <property type="entry name" value="G3P_DH_NAD-dep_C"/>
</dbReference>
<dbReference type="InterPro" id="IPR011128">
    <property type="entry name" value="G3P_DH_NAD-dep_N"/>
</dbReference>
<dbReference type="InterPro" id="IPR036291">
    <property type="entry name" value="NAD(P)-bd_dom_sf"/>
</dbReference>
<dbReference type="NCBIfam" id="NF000940">
    <property type="entry name" value="PRK00094.1-2"/>
    <property type="match status" value="1"/>
</dbReference>
<dbReference type="NCBIfam" id="NF000942">
    <property type="entry name" value="PRK00094.1-4"/>
    <property type="match status" value="1"/>
</dbReference>
<dbReference type="NCBIfam" id="NF011211">
    <property type="entry name" value="PRK14618.1"/>
    <property type="match status" value="1"/>
</dbReference>
<dbReference type="PANTHER" id="PTHR11728">
    <property type="entry name" value="GLYCEROL-3-PHOSPHATE DEHYDROGENASE"/>
    <property type="match status" value="1"/>
</dbReference>
<dbReference type="PANTHER" id="PTHR11728:SF1">
    <property type="entry name" value="GLYCEROL-3-PHOSPHATE DEHYDROGENASE [NAD(+)] 2, CHLOROPLASTIC"/>
    <property type="match status" value="1"/>
</dbReference>
<dbReference type="Pfam" id="PF07479">
    <property type="entry name" value="NAD_Gly3P_dh_C"/>
    <property type="match status" value="1"/>
</dbReference>
<dbReference type="Pfam" id="PF01210">
    <property type="entry name" value="NAD_Gly3P_dh_N"/>
    <property type="match status" value="1"/>
</dbReference>
<dbReference type="PIRSF" id="PIRSF000114">
    <property type="entry name" value="Glycerol-3-P_dh"/>
    <property type="match status" value="1"/>
</dbReference>
<dbReference type="PRINTS" id="PR00077">
    <property type="entry name" value="GPDHDRGNASE"/>
</dbReference>
<dbReference type="SUPFAM" id="SSF48179">
    <property type="entry name" value="6-phosphogluconate dehydrogenase C-terminal domain-like"/>
    <property type="match status" value="1"/>
</dbReference>
<dbReference type="SUPFAM" id="SSF51735">
    <property type="entry name" value="NAD(P)-binding Rossmann-fold domains"/>
    <property type="match status" value="1"/>
</dbReference>
<dbReference type="PROSITE" id="PS00957">
    <property type="entry name" value="NAD_G3PDH"/>
    <property type="match status" value="1"/>
</dbReference>
<proteinExistence type="inferred from homology"/>
<protein>
    <recommendedName>
        <fullName evidence="1">Glycerol-3-phosphate dehydrogenase [NAD(P)+]</fullName>
        <ecNumber evidence="1">1.1.1.94</ecNumber>
    </recommendedName>
    <alternativeName>
        <fullName evidence="1">NAD(P)(+)-dependent glycerol-3-phosphate dehydrogenase</fullName>
    </alternativeName>
    <alternativeName>
        <fullName evidence="1">NAD(P)H-dependent dihydroxyacetone-phosphate reductase</fullName>
    </alternativeName>
</protein>
<keyword id="KW-0963">Cytoplasm</keyword>
<keyword id="KW-0444">Lipid biosynthesis</keyword>
<keyword id="KW-0443">Lipid metabolism</keyword>
<keyword id="KW-0520">NAD</keyword>
<keyword id="KW-0521">NADP</keyword>
<keyword id="KW-0547">Nucleotide-binding</keyword>
<keyword id="KW-0560">Oxidoreductase</keyword>
<keyword id="KW-0594">Phospholipid biosynthesis</keyword>
<keyword id="KW-1208">Phospholipid metabolism</keyword>
<keyword id="KW-1185">Reference proteome</keyword>
<feature type="chain" id="PRO_0000255390" description="Glycerol-3-phosphate dehydrogenase [NAD(P)+]">
    <location>
        <begin position="1"/>
        <end position="322"/>
    </location>
</feature>
<feature type="active site" description="Proton acceptor" evidence="1">
    <location>
        <position position="184"/>
    </location>
</feature>
<feature type="binding site" evidence="1">
    <location>
        <position position="11"/>
    </location>
    <ligand>
        <name>NADPH</name>
        <dbReference type="ChEBI" id="CHEBI:57783"/>
    </ligand>
</feature>
<feature type="binding site" evidence="1">
    <location>
        <position position="31"/>
    </location>
    <ligand>
        <name>NADPH</name>
        <dbReference type="ChEBI" id="CHEBI:57783"/>
    </ligand>
</feature>
<feature type="binding site" evidence="1">
    <location>
        <position position="32"/>
    </location>
    <ligand>
        <name>NADPH</name>
        <dbReference type="ChEBI" id="CHEBI:57783"/>
    </ligand>
</feature>
<feature type="binding site" evidence="1">
    <location>
        <position position="101"/>
    </location>
    <ligand>
        <name>NADPH</name>
        <dbReference type="ChEBI" id="CHEBI:57783"/>
    </ligand>
</feature>
<feature type="binding site" evidence="1">
    <location>
        <position position="101"/>
    </location>
    <ligand>
        <name>sn-glycerol 3-phosphate</name>
        <dbReference type="ChEBI" id="CHEBI:57597"/>
    </ligand>
</feature>
<feature type="binding site" evidence="1">
    <location>
        <position position="130"/>
    </location>
    <ligand>
        <name>sn-glycerol 3-phosphate</name>
        <dbReference type="ChEBI" id="CHEBI:57597"/>
    </ligand>
</feature>
<feature type="binding site" evidence="1">
    <location>
        <position position="134"/>
    </location>
    <ligand>
        <name>NADPH</name>
        <dbReference type="ChEBI" id="CHEBI:57783"/>
    </ligand>
</feature>
<feature type="binding site" evidence="1">
    <location>
        <position position="184"/>
    </location>
    <ligand>
        <name>sn-glycerol 3-phosphate</name>
        <dbReference type="ChEBI" id="CHEBI:57597"/>
    </ligand>
</feature>
<feature type="binding site" evidence="1">
    <location>
        <position position="237"/>
    </location>
    <ligand>
        <name>sn-glycerol 3-phosphate</name>
        <dbReference type="ChEBI" id="CHEBI:57597"/>
    </ligand>
</feature>
<feature type="binding site" evidence="1">
    <location>
        <position position="247"/>
    </location>
    <ligand>
        <name>sn-glycerol 3-phosphate</name>
        <dbReference type="ChEBI" id="CHEBI:57597"/>
    </ligand>
</feature>
<feature type="binding site" evidence="1">
    <location>
        <position position="248"/>
    </location>
    <ligand>
        <name>NADPH</name>
        <dbReference type="ChEBI" id="CHEBI:57783"/>
    </ligand>
</feature>
<feature type="binding site" evidence="1">
    <location>
        <position position="248"/>
    </location>
    <ligand>
        <name>sn-glycerol 3-phosphate</name>
        <dbReference type="ChEBI" id="CHEBI:57597"/>
    </ligand>
</feature>
<feature type="binding site" evidence="1">
    <location>
        <position position="249"/>
    </location>
    <ligand>
        <name>sn-glycerol 3-phosphate</name>
        <dbReference type="ChEBI" id="CHEBI:57597"/>
    </ligand>
</feature>
<feature type="binding site" evidence="1">
    <location>
        <position position="270"/>
    </location>
    <ligand>
        <name>NADPH</name>
        <dbReference type="ChEBI" id="CHEBI:57783"/>
    </ligand>
</feature>
<feature type="binding site" evidence="1">
    <location>
        <position position="272"/>
    </location>
    <ligand>
        <name>NADPH</name>
        <dbReference type="ChEBI" id="CHEBI:57783"/>
    </ligand>
</feature>
<reference key="1">
    <citation type="submission" date="2004-11" db="EMBL/GenBank/DDBJ databases">
        <title>Complete genome sequence of Thermus thermophilus HB8.</title>
        <authorList>
            <person name="Masui R."/>
            <person name="Kurokawa K."/>
            <person name="Nakagawa N."/>
            <person name="Tokunaga F."/>
            <person name="Koyama Y."/>
            <person name="Shibata T."/>
            <person name="Oshima T."/>
            <person name="Yokoyama S."/>
            <person name="Yasunaga T."/>
            <person name="Kuramitsu S."/>
        </authorList>
    </citation>
    <scope>NUCLEOTIDE SEQUENCE [LARGE SCALE GENOMIC DNA]</scope>
    <source>
        <strain>ATCC 27634 / DSM 579 / HB8</strain>
    </source>
</reference>
<sequence length="322" mass="34102">MRVAVLGAGAWGTALAVLLASKGVPTRLWARRKAQAEALKAMRENRDYLPGVALPAYLYPTHDPEEALEGAELAVLAVPSKALRETVAGLPPAPWYVSATKGLFYGEEGVRTPAEVVEALTQRPVVALSGPNHAEEVARFLPTASVAAGPEDLARRVQALFSGPTFRVYTSRDRRGVELGGAVKNVLALAAGMVDGLRLGDNAKAALLTRGLKEMVRFGTALGGEEATFYGLAGLGDLLATAYSLHSRNRMAGESLVRGVDREALEARGVVEGLYAVKAMVAWGKEQGVELPVAEAVHRVAHEGLDPLAALKALMAREPKEE</sequence>
<gene>
    <name evidence="1" type="primary">gpsA</name>
    <name type="ordered locus">TTHA1740</name>
</gene>
<organism>
    <name type="scientific">Thermus thermophilus (strain ATCC 27634 / DSM 579 / HB8)</name>
    <dbReference type="NCBI Taxonomy" id="300852"/>
    <lineage>
        <taxon>Bacteria</taxon>
        <taxon>Thermotogati</taxon>
        <taxon>Deinococcota</taxon>
        <taxon>Deinococci</taxon>
        <taxon>Thermales</taxon>
        <taxon>Thermaceae</taxon>
        <taxon>Thermus</taxon>
    </lineage>
</organism>
<evidence type="ECO:0000255" key="1">
    <source>
        <dbReference type="HAMAP-Rule" id="MF_00394"/>
    </source>
</evidence>
<name>GPDA_THET8</name>
<comment type="function">
    <text evidence="1">Catalyzes the reduction of the glycolytic intermediate dihydroxyacetone phosphate (DHAP) to sn-glycerol 3-phosphate (G3P), the key precursor for phospholipid synthesis.</text>
</comment>
<comment type="catalytic activity">
    <reaction evidence="1">
        <text>sn-glycerol 3-phosphate + NAD(+) = dihydroxyacetone phosphate + NADH + H(+)</text>
        <dbReference type="Rhea" id="RHEA:11092"/>
        <dbReference type="ChEBI" id="CHEBI:15378"/>
        <dbReference type="ChEBI" id="CHEBI:57540"/>
        <dbReference type="ChEBI" id="CHEBI:57597"/>
        <dbReference type="ChEBI" id="CHEBI:57642"/>
        <dbReference type="ChEBI" id="CHEBI:57945"/>
        <dbReference type="EC" id="1.1.1.94"/>
    </reaction>
    <physiologicalReaction direction="right-to-left" evidence="1">
        <dbReference type="Rhea" id="RHEA:11094"/>
    </physiologicalReaction>
</comment>
<comment type="catalytic activity">
    <reaction evidence="1">
        <text>sn-glycerol 3-phosphate + NADP(+) = dihydroxyacetone phosphate + NADPH + H(+)</text>
        <dbReference type="Rhea" id="RHEA:11096"/>
        <dbReference type="ChEBI" id="CHEBI:15378"/>
        <dbReference type="ChEBI" id="CHEBI:57597"/>
        <dbReference type="ChEBI" id="CHEBI:57642"/>
        <dbReference type="ChEBI" id="CHEBI:57783"/>
        <dbReference type="ChEBI" id="CHEBI:58349"/>
        <dbReference type="EC" id="1.1.1.94"/>
    </reaction>
    <physiologicalReaction direction="right-to-left" evidence="1">
        <dbReference type="Rhea" id="RHEA:11098"/>
    </physiologicalReaction>
</comment>
<comment type="pathway">
    <text evidence="1">Membrane lipid metabolism; glycerophospholipid metabolism.</text>
</comment>
<comment type="subcellular location">
    <subcellularLocation>
        <location evidence="1">Cytoplasm</location>
    </subcellularLocation>
</comment>
<comment type="similarity">
    <text evidence="1">Belongs to the NAD-dependent glycerol-3-phosphate dehydrogenase family.</text>
</comment>